<reference key="1">
    <citation type="submission" date="2003-08" db="EMBL/GenBank/DDBJ databases">
        <title>Species determination utilizing Porphyra (Rhodophyta) plastid DNA RuBisCo sequences.</title>
        <authorList>
            <person name="Kito H."/>
            <person name="Kunimoto M."/>
            <person name="Mizukami Y."/>
            <person name="Murase N."/>
            <person name="Kuroki T."/>
            <person name="Taruta M."/>
            <person name="Levine I."/>
        </authorList>
    </citation>
    <scope>NUCLEOTIDE SEQUENCE [GENOMIC DNA]</scope>
    <source>
        <tissue>Thallus</tissue>
    </source>
</reference>
<reference key="2">
    <citation type="journal article" date="1994" name="Proc. Natl. Acad. Sci. U.S.A.">
        <title>A gene phylogeny of the red algae (Rhodophyta) based on plastid rbcL.</title>
        <authorList>
            <person name="Freshwater D.W."/>
            <person name="Fredericq S."/>
            <person name="Butler B.S."/>
            <person name="Hommersand M.H."/>
            <person name="Chase M.W."/>
        </authorList>
    </citation>
    <scope>NUCLEOTIDE SEQUENCE [GENOMIC DNA] OF 48-488</scope>
</reference>
<dbReference type="EC" id="4.1.1.39" evidence="1"/>
<dbReference type="EMBL" id="AB118580">
    <property type="protein sequence ID" value="BAC84927.1"/>
    <property type="molecule type" value="Genomic_DNA"/>
</dbReference>
<dbReference type="EMBL" id="U04041">
    <property type="protein sequence ID" value="AAB16952.1"/>
    <property type="molecule type" value="Genomic_DNA"/>
</dbReference>
<dbReference type="SMR" id="P50255"/>
<dbReference type="GO" id="GO:0009507">
    <property type="term" value="C:chloroplast"/>
    <property type="evidence" value="ECO:0007669"/>
    <property type="project" value="UniProtKB-SubCell"/>
</dbReference>
<dbReference type="GO" id="GO:0000287">
    <property type="term" value="F:magnesium ion binding"/>
    <property type="evidence" value="ECO:0007669"/>
    <property type="project" value="UniProtKB-UniRule"/>
</dbReference>
<dbReference type="GO" id="GO:0004497">
    <property type="term" value="F:monooxygenase activity"/>
    <property type="evidence" value="ECO:0007669"/>
    <property type="project" value="UniProtKB-KW"/>
</dbReference>
<dbReference type="GO" id="GO:0016984">
    <property type="term" value="F:ribulose-bisphosphate carboxylase activity"/>
    <property type="evidence" value="ECO:0007669"/>
    <property type="project" value="UniProtKB-UniRule"/>
</dbReference>
<dbReference type="GO" id="GO:0019253">
    <property type="term" value="P:reductive pentose-phosphate cycle"/>
    <property type="evidence" value="ECO:0007669"/>
    <property type="project" value="UniProtKB-UniRule"/>
</dbReference>
<dbReference type="CDD" id="cd08212">
    <property type="entry name" value="RuBisCO_large_I"/>
    <property type="match status" value="1"/>
</dbReference>
<dbReference type="Gene3D" id="3.20.20.110">
    <property type="entry name" value="Ribulose bisphosphate carboxylase, large subunit, C-terminal domain"/>
    <property type="match status" value="1"/>
</dbReference>
<dbReference type="Gene3D" id="3.30.70.150">
    <property type="entry name" value="RuBisCO large subunit, N-terminal domain"/>
    <property type="match status" value="1"/>
</dbReference>
<dbReference type="HAMAP" id="MF_01338">
    <property type="entry name" value="RuBisCO_L_type1"/>
    <property type="match status" value="1"/>
</dbReference>
<dbReference type="InterPro" id="IPR033966">
    <property type="entry name" value="RuBisCO"/>
</dbReference>
<dbReference type="InterPro" id="IPR020878">
    <property type="entry name" value="RuBisCo_large_chain_AS"/>
</dbReference>
<dbReference type="InterPro" id="IPR000685">
    <property type="entry name" value="RuBisCO_lsu_C"/>
</dbReference>
<dbReference type="InterPro" id="IPR036376">
    <property type="entry name" value="RuBisCO_lsu_C_sf"/>
</dbReference>
<dbReference type="InterPro" id="IPR017443">
    <property type="entry name" value="RuBisCO_lsu_fd_N"/>
</dbReference>
<dbReference type="InterPro" id="IPR036422">
    <property type="entry name" value="RuBisCO_lsu_N_sf"/>
</dbReference>
<dbReference type="InterPro" id="IPR020888">
    <property type="entry name" value="RuBisCO_lsuI"/>
</dbReference>
<dbReference type="NCBIfam" id="NF003252">
    <property type="entry name" value="PRK04208.1"/>
    <property type="match status" value="1"/>
</dbReference>
<dbReference type="PANTHER" id="PTHR42704">
    <property type="entry name" value="RIBULOSE BISPHOSPHATE CARBOXYLASE"/>
    <property type="match status" value="1"/>
</dbReference>
<dbReference type="PANTHER" id="PTHR42704:SF17">
    <property type="entry name" value="RIBULOSE BISPHOSPHATE CARBOXYLASE LARGE CHAIN"/>
    <property type="match status" value="1"/>
</dbReference>
<dbReference type="Pfam" id="PF00016">
    <property type="entry name" value="RuBisCO_large"/>
    <property type="match status" value="1"/>
</dbReference>
<dbReference type="Pfam" id="PF02788">
    <property type="entry name" value="RuBisCO_large_N"/>
    <property type="match status" value="1"/>
</dbReference>
<dbReference type="SFLD" id="SFLDG01052">
    <property type="entry name" value="RuBisCO"/>
    <property type="match status" value="1"/>
</dbReference>
<dbReference type="SFLD" id="SFLDS00014">
    <property type="entry name" value="RuBisCO"/>
    <property type="match status" value="1"/>
</dbReference>
<dbReference type="SFLD" id="SFLDG00301">
    <property type="entry name" value="RuBisCO-like_proteins"/>
    <property type="match status" value="1"/>
</dbReference>
<dbReference type="SUPFAM" id="SSF51649">
    <property type="entry name" value="RuBisCo, C-terminal domain"/>
    <property type="match status" value="1"/>
</dbReference>
<dbReference type="SUPFAM" id="SSF54966">
    <property type="entry name" value="RuBisCO, large subunit, small (N-terminal) domain"/>
    <property type="match status" value="1"/>
</dbReference>
<dbReference type="PROSITE" id="PS00157">
    <property type="entry name" value="RUBISCO_LARGE"/>
    <property type="match status" value="1"/>
</dbReference>
<proteinExistence type="inferred from homology"/>
<gene>
    <name evidence="1" type="primary">rbcL</name>
</gene>
<organism>
    <name type="scientific">Pyropia suborbiculata</name>
    <name type="common">Red alga</name>
    <dbReference type="NCBI Taxonomy" id="1185355"/>
    <lineage>
        <taxon>Eukaryota</taxon>
        <taxon>Rhodophyta</taxon>
        <taxon>Bangiophyceae</taxon>
        <taxon>Bangiales</taxon>
        <taxon>Bangiaceae</taxon>
        <taxon>Pyropia</taxon>
    </lineage>
</organism>
<protein>
    <recommendedName>
        <fullName evidence="1">Ribulose bisphosphate carboxylase large chain</fullName>
        <shortName evidence="1">RuBisCO large subunit</shortName>
        <ecNumber evidence="1">4.1.1.39</ecNumber>
    </recommendedName>
</protein>
<comment type="function">
    <text evidence="1">RuBisCO catalyzes two reactions: the carboxylation of D-ribulose 1,5-bisphosphate, the primary event in carbon dioxide fixation, as well as the oxidative fragmentation of the pentose substrate in the photorespiration process. Both reactions occur simultaneously and in competition at the same active site.</text>
</comment>
<comment type="catalytic activity">
    <reaction evidence="1">
        <text>2 (2R)-3-phosphoglycerate + 2 H(+) = D-ribulose 1,5-bisphosphate + CO2 + H2O</text>
        <dbReference type="Rhea" id="RHEA:23124"/>
        <dbReference type="ChEBI" id="CHEBI:15377"/>
        <dbReference type="ChEBI" id="CHEBI:15378"/>
        <dbReference type="ChEBI" id="CHEBI:16526"/>
        <dbReference type="ChEBI" id="CHEBI:57870"/>
        <dbReference type="ChEBI" id="CHEBI:58272"/>
        <dbReference type="EC" id="4.1.1.39"/>
    </reaction>
</comment>
<comment type="catalytic activity">
    <reaction evidence="1">
        <text>D-ribulose 1,5-bisphosphate + O2 = 2-phosphoglycolate + (2R)-3-phosphoglycerate + 2 H(+)</text>
        <dbReference type="Rhea" id="RHEA:36631"/>
        <dbReference type="ChEBI" id="CHEBI:15378"/>
        <dbReference type="ChEBI" id="CHEBI:15379"/>
        <dbReference type="ChEBI" id="CHEBI:57870"/>
        <dbReference type="ChEBI" id="CHEBI:58033"/>
        <dbReference type="ChEBI" id="CHEBI:58272"/>
    </reaction>
</comment>
<comment type="cofactor">
    <cofactor evidence="1">
        <name>Mg(2+)</name>
        <dbReference type="ChEBI" id="CHEBI:18420"/>
    </cofactor>
    <text evidence="1">Binds 1 Mg(2+) ion per subunit.</text>
</comment>
<comment type="subunit">
    <text evidence="1">Heterohexadecamer of 8 large chains and 8 small chains.</text>
</comment>
<comment type="subcellular location">
    <subcellularLocation>
        <location>Plastid</location>
        <location>Chloroplast</location>
    </subcellularLocation>
</comment>
<comment type="miscellaneous">
    <text evidence="1">The basic functional RuBisCO is composed of a large chain homodimer in a 'head-to-tail' conformation. In form I RuBisCO this homodimer is arranged in a barrel-like tetramer with the small subunits forming a tetrameric 'cap' on each end of the 'barrel'.</text>
</comment>
<comment type="similarity">
    <text evidence="1">Belongs to the RuBisCO large chain family. Type I subfamily.</text>
</comment>
<evidence type="ECO:0000255" key="1">
    <source>
        <dbReference type="HAMAP-Rule" id="MF_01338"/>
    </source>
</evidence>
<evidence type="ECO:0000305" key="2"/>
<keyword id="KW-0113">Calvin cycle</keyword>
<keyword id="KW-0120">Carbon dioxide fixation</keyword>
<keyword id="KW-0150">Chloroplast</keyword>
<keyword id="KW-0456">Lyase</keyword>
<keyword id="KW-0460">Magnesium</keyword>
<keyword id="KW-0479">Metal-binding</keyword>
<keyword id="KW-0503">Monooxygenase</keyword>
<keyword id="KW-0560">Oxidoreductase</keyword>
<keyword id="KW-0601">Photorespiration</keyword>
<keyword id="KW-0602">Photosynthesis</keyword>
<keyword id="KW-0934">Plastid</keyword>
<geneLocation type="chloroplast"/>
<feature type="chain" id="PRO_0000062573" description="Ribulose bisphosphate carboxylase large chain">
    <location>
        <begin position="1"/>
        <end position="488"/>
    </location>
</feature>
<feature type="active site" description="Proton acceptor" evidence="1">
    <location>
        <position position="179"/>
    </location>
</feature>
<feature type="active site" description="Proton acceptor" evidence="1">
    <location>
        <position position="297"/>
    </location>
</feature>
<feature type="binding site" description="in homodimeric partner" evidence="1">
    <location>
        <position position="127"/>
    </location>
    <ligand>
        <name>substrate</name>
    </ligand>
</feature>
<feature type="binding site" evidence="1">
    <location>
        <position position="177"/>
    </location>
    <ligand>
        <name>substrate</name>
    </ligand>
</feature>
<feature type="binding site" evidence="1">
    <location>
        <position position="181"/>
    </location>
    <ligand>
        <name>substrate</name>
    </ligand>
</feature>
<feature type="binding site" description="via carbamate group" evidence="1">
    <location>
        <position position="205"/>
    </location>
    <ligand>
        <name>Mg(2+)</name>
        <dbReference type="ChEBI" id="CHEBI:18420"/>
    </ligand>
</feature>
<feature type="binding site" evidence="1">
    <location>
        <position position="207"/>
    </location>
    <ligand>
        <name>Mg(2+)</name>
        <dbReference type="ChEBI" id="CHEBI:18420"/>
    </ligand>
</feature>
<feature type="binding site" evidence="1">
    <location>
        <position position="208"/>
    </location>
    <ligand>
        <name>Mg(2+)</name>
        <dbReference type="ChEBI" id="CHEBI:18420"/>
    </ligand>
</feature>
<feature type="binding site" evidence="1">
    <location>
        <position position="298"/>
    </location>
    <ligand>
        <name>substrate</name>
    </ligand>
</feature>
<feature type="binding site" evidence="1">
    <location>
        <position position="330"/>
    </location>
    <ligand>
        <name>substrate</name>
    </ligand>
</feature>
<feature type="binding site" evidence="1">
    <location>
        <position position="382"/>
    </location>
    <ligand>
        <name>substrate</name>
    </ligand>
</feature>
<feature type="site" description="Transition state stabilizer" evidence="1">
    <location>
        <position position="337"/>
    </location>
</feature>
<feature type="modified residue" description="N6-carboxylysine" evidence="1">
    <location>
        <position position="205"/>
    </location>
</feature>
<feature type="sequence conflict" description="In Ref. 2; AAB16952." evidence="2" ref="2">
    <original>A</original>
    <variation>R</variation>
    <location>
        <position position="88"/>
    </location>
</feature>
<feature type="sequence conflict" description="In Ref. 2; AAB16952." evidence="2" ref="2">
    <original>SI</original>
    <variation>LY</variation>
    <location>
        <begin position="116"/>
        <end position="117"/>
    </location>
</feature>
<feature type="sequence conflict" description="In Ref. 2; AAB16952." evidence="2" ref="2">
    <original>S</original>
    <variation>A</variation>
    <location>
        <position position="235"/>
    </location>
</feature>
<feature type="sequence conflict" description="In Ref. 2; AAB16952." evidence="2" ref="2">
    <original>D</original>
    <variation>V</variation>
    <location>
        <position position="399"/>
    </location>
</feature>
<feature type="sequence conflict" description="In Ref. 2; AAB16952." evidence="2" ref="2">
    <original>K</original>
    <variation>R</variation>
    <location>
        <position position="424"/>
    </location>
</feature>
<feature type="sequence conflict" description="In Ref. 2; AAB16952." evidence="2" ref="2">
    <original>G</original>
    <variation>E</variation>
    <location>
        <position position="437"/>
    </location>
</feature>
<feature type="sequence conflict" description="In Ref. 2; AAB16952." evidence="2" ref="2">
    <original>K</original>
    <variation>E</variation>
    <location>
        <position position="443"/>
    </location>
</feature>
<name>RBL_PORCA</name>
<sequence length="488" mass="54045">MSQSVESRTRIKSERYESGVIPYAKMGYWDADYVIKETDILALFRITPQPGVDPIEASAAIAGESSTATWTVVWTDLLTACDLYRAKAYRVDPVPNVADQYFAYIAYDIDLFEEGSIANLTASIIGNVFGFKAVKALRLEDMRMPVAYLKTFQGPATGLIVERERMDKFGRPFLGATVKPKLGLSGKNYGRVVYEGLKGGLDFLKDDENINSQPFMRWRERFLYSMEGVNKASASAGEIKGHYLNVTAATMEDMYERAEFSKEVGSIICMIDLVIGYTAIQSMAIWARKHDMILHLHRAGNSTYSRQKNHGMNFRVICKWMRMAGVDHIHAGTVVGKLEGDPLMIKGFYNTLLESETDINLPQGLFFAQNWASLRKVVPVASGGIHAGQMHQLLDYLGDDVVLQFGGGTIGHPDGIQAGATANKVALESMVMARNEGRNYVAKGPQILRDAAKTCGPLQTALDLWKDISFNYTSTDTADFVETPTANI</sequence>
<accession>P50255</accession>
<accession>Q760S5</accession>